<dbReference type="EMBL" id="CP000010">
    <property type="protein sequence ID" value="AAU48584.1"/>
    <property type="molecule type" value="Genomic_DNA"/>
</dbReference>
<dbReference type="RefSeq" id="WP_004197258.1">
    <property type="nucleotide sequence ID" value="NC_006348.1"/>
</dbReference>
<dbReference type="RefSeq" id="YP_104801.1">
    <property type="nucleotide sequence ID" value="NC_006348.1"/>
</dbReference>
<dbReference type="SMR" id="Q62ES7"/>
<dbReference type="DNASU" id="3090521"/>
<dbReference type="GeneID" id="92980999"/>
<dbReference type="KEGG" id="bma:BMA3331"/>
<dbReference type="PATRIC" id="fig|243160.12.peg.3416"/>
<dbReference type="eggNOG" id="COG2063">
    <property type="taxonomic scope" value="Bacteria"/>
</dbReference>
<dbReference type="HOGENOM" id="CLU_069313_0_0_4"/>
<dbReference type="Proteomes" id="UP000006693">
    <property type="component" value="Chromosome 1"/>
</dbReference>
<dbReference type="GO" id="GO:0009427">
    <property type="term" value="C:bacterial-type flagellum basal body, distal rod, L ring"/>
    <property type="evidence" value="ECO:0007669"/>
    <property type="project" value="InterPro"/>
</dbReference>
<dbReference type="GO" id="GO:0009279">
    <property type="term" value="C:cell outer membrane"/>
    <property type="evidence" value="ECO:0007669"/>
    <property type="project" value="UniProtKB-SubCell"/>
</dbReference>
<dbReference type="GO" id="GO:0003774">
    <property type="term" value="F:cytoskeletal motor activity"/>
    <property type="evidence" value="ECO:0007669"/>
    <property type="project" value="InterPro"/>
</dbReference>
<dbReference type="GO" id="GO:0071973">
    <property type="term" value="P:bacterial-type flagellum-dependent cell motility"/>
    <property type="evidence" value="ECO:0007669"/>
    <property type="project" value="InterPro"/>
</dbReference>
<dbReference type="HAMAP" id="MF_00415">
    <property type="entry name" value="FlgH"/>
    <property type="match status" value="1"/>
</dbReference>
<dbReference type="InterPro" id="IPR000527">
    <property type="entry name" value="Flag_Lring"/>
</dbReference>
<dbReference type="NCBIfam" id="NF009337">
    <property type="entry name" value="PRK12697.1"/>
    <property type="match status" value="1"/>
</dbReference>
<dbReference type="PANTHER" id="PTHR34933">
    <property type="entry name" value="FLAGELLAR L-RING PROTEIN"/>
    <property type="match status" value="1"/>
</dbReference>
<dbReference type="PANTHER" id="PTHR34933:SF3">
    <property type="entry name" value="FLAGELLAR L-RING PROTEIN"/>
    <property type="match status" value="1"/>
</dbReference>
<dbReference type="Pfam" id="PF02107">
    <property type="entry name" value="FlgH"/>
    <property type="match status" value="1"/>
</dbReference>
<dbReference type="PRINTS" id="PR01008">
    <property type="entry name" value="FLGLRINGFLGH"/>
</dbReference>
<dbReference type="PROSITE" id="PS51257">
    <property type="entry name" value="PROKAR_LIPOPROTEIN"/>
    <property type="match status" value="1"/>
</dbReference>
<reference key="1">
    <citation type="journal article" date="2004" name="Proc. Natl. Acad. Sci. U.S.A.">
        <title>Structural flexibility in the Burkholderia mallei genome.</title>
        <authorList>
            <person name="Nierman W.C."/>
            <person name="DeShazer D."/>
            <person name="Kim H.S."/>
            <person name="Tettelin H."/>
            <person name="Nelson K.E."/>
            <person name="Feldblyum T.V."/>
            <person name="Ulrich R.L."/>
            <person name="Ronning C.M."/>
            <person name="Brinkac L.M."/>
            <person name="Daugherty S.C."/>
            <person name="Davidsen T.D."/>
            <person name="DeBoy R.T."/>
            <person name="Dimitrov G."/>
            <person name="Dodson R.J."/>
            <person name="Durkin A.S."/>
            <person name="Gwinn M.L."/>
            <person name="Haft D.H."/>
            <person name="Khouri H.M."/>
            <person name="Kolonay J.F."/>
            <person name="Madupu R."/>
            <person name="Mohammoud Y."/>
            <person name="Nelson W.C."/>
            <person name="Radune D."/>
            <person name="Romero C.M."/>
            <person name="Sarria S."/>
            <person name="Selengut J."/>
            <person name="Shamblin C."/>
            <person name="Sullivan S.A."/>
            <person name="White O."/>
            <person name="Yu Y."/>
            <person name="Zafar N."/>
            <person name="Zhou L."/>
            <person name="Fraser C.M."/>
        </authorList>
    </citation>
    <scope>NUCLEOTIDE SEQUENCE [LARGE SCALE GENOMIC DNA]</scope>
    <source>
        <strain>ATCC 23344</strain>
    </source>
</reference>
<gene>
    <name evidence="1" type="primary">flgH</name>
    <name type="ordered locus">BMA3331</name>
</gene>
<name>FLGH_BURMA</name>
<feature type="signal peptide" evidence="1">
    <location>
        <begin position="1"/>
        <end position="18"/>
    </location>
</feature>
<feature type="chain" id="PRO_0000009434" description="Flagellar L-ring protein">
    <location>
        <begin position="19"/>
        <end position="222"/>
    </location>
</feature>
<feature type="lipid moiety-binding region" description="N-palmitoyl cysteine" evidence="1">
    <location>
        <position position="19"/>
    </location>
</feature>
<feature type="lipid moiety-binding region" description="S-diacylglycerol cysteine" evidence="1">
    <location>
        <position position="19"/>
    </location>
</feature>
<comment type="function">
    <text evidence="1">Assembles around the rod to form the L-ring and probably protects the motor/basal body from shearing forces during rotation.</text>
</comment>
<comment type="subunit">
    <text evidence="1">The basal body constitutes a major portion of the flagellar organelle and consists of four rings (L,P,S, and M) mounted on a central rod.</text>
</comment>
<comment type="subcellular location">
    <subcellularLocation>
        <location evidence="1">Cell outer membrane</location>
        <topology evidence="1">Lipid-anchor</topology>
    </subcellularLocation>
    <subcellularLocation>
        <location evidence="1">Bacterial flagellum basal body</location>
    </subcellularLocation>
</comment>
<comment type="similarity">
    <text evidence="1">Belongs to the FlgH family.</text>
</comment>
<protein>
    <recommendedName>
        <fullName evidence="1">Flagellar L-ring protein</fullName>
    </recommendedName>
    <alternativeName>
        <fullName evidence="1">Basal body L-ring protein</fullName>
    </alternativeName>
</protein>
<organism>
    <name type="scientific">Burkholderia mallei (strain ATCC 23344)</name>
    <dbReference type="NCBI Taxonomy" id="243160"/>
    <lineage>
        <taxon>Bacteria</taxon>
        <taxon>Pseudomonadati</taxon>
        <taxon>Pseudomonadota</taxon>
        <taxon>Betaproteobacteria</taxon>
        <taxon>Burkholderiales</taxon>
        <taxon>Burkholderiaceae</taxon>
        <taxon>Burkholderia</taxon>
        <taxon>pseudomallei group</taxon>
    </lineage>
</organism>
<evidence type="ECO:0000255" key="1">
    <source>
        <dbReference type="HAMAP-Rule" id="MF_00415"/>
    </source>
</evidence>
<proteinExistence type="inferred from homology"/>
<keyword id="KW-0975">Bacterial flagellum</keyword>
<keyword id="KW-0998">Cell outer membrane</keyword>
<keyword id="KW-0449">Lipoprotein</keyword>
<keyword id="KW-0472">Membrane</keyword>
<keyword id="KW-0564">Palmitate</keyword>
<keyword id="KW-1185">Reference proteome</keyword>
<keyword id="KW-0732">Signal</keyword>
<sequence>MRRPGAAALAAAALALAGCAQIPREPITQQPMSAMPPMPPAMQAPGSIYNPGYAGRPLFEDQRPRNVGDILTIVIAENINATKSSGANTNRQGNTSFDVPTAGFLGGLFNKANLSAQGANKFAATGGASAANTFNGTITVTVTNVLPNGNLVVSGEKQMLINQGNEFVRFSGIVNPNTISGQNSVYSTQVADARIEYSAKGYINEAETMGWLQRFFLNIAPW</sequence>
<accession>Q62ES7</accession>